<reference key="1">
    <citation type="journal article" date="2000" name="Nature">
        <title>Sequence and analysis of chromosome 3 of the plant Arabidopsis thaliana.</title>
        <authorList>
            <person name="Salanoubat M."/>
            <person name="Lemcke K."/>
            <person name="Rieger M."/>
            <person name="Ansorge W."/>
            <person name="Unseld M."/>
            <person name="Fartmann B."/>
            <person name="Valle G."/>
            <person name="Bloecker H."/>
            <person name="Perez-Alonso M."/>
            <person name="Obermaier B."/>
            <person name="Delseny M."/>
            <person name="Boutry M."/>
            <person name="Grivell L.A."/>
            <person name="Mache R."/>
            <person name="Puigdomenech P."/>
            <person name="De Simone V."/>
            <person name="Choisne N."/>
            <person name="Artiguenave F."/>
            <person name="Robert C."/>
            <person name="Brottier P."/>
            <person name="Wincker P."/>
            <person name="Cattolico L."/>
            <person name="Weissenbach J."/>
            <person name="Saurin W."/>
            <person name="Quetier F."/>
            <person name="Schaefer M."/>
            <person name="Mueller-Auer S."/>
            <person name="Gabel C."/>
            <person name="Fuchs M."/>
            <person name="Benes V."/>
            <person name="Wurmbach E."/>
            <person name="Drzonek H."/>
            <person name="Erfle H."/>
            <person name="Jordan N."/>
            <person name="Bangert S."/>
            <person name="Wiedelmann R."/>
            <person name="Kranz H."/>
            <person name="Voss H."/>
            <person name="Holland R."/>
            <person name="Brandt P."/>
            <person name="Nyakatura G."/>
            <person name="Vezzi A."/>
            <person name="D'Angelo M."/>
            <person name="Pallavicini A."/>
            <person name="Toppo S."/>
            <person name="Simionati B."/>
            <person name="Conrad A."/>
            <person name="Hornischer K."/>
            <person name="Kauer G."/>
            <person name="Loehnert T.-H."/>
            <person name="Nordsiek G."/>
            <person name="Reichelt J."/>
            <person name="Scharfe M."/>
            <person name="Schoen O."/>
            <person name="Bargues M."/>
            <person name="Terol J."/>
            <person name="Climent J."/>
            <person name="Navarro P."/>
            <person name="Collado C."/>
            <person name="Perez-Perez A."/>
            <person name="Ottenwaelder B."/>
            <person name="Duchemin D."/>
            <person name="Cooke R."/>
            <person name="Laudie M."/>
            <person name="Berger-Llauro C."/>
            <person name="Purnelle B."/>
            <person name="Masuy D."/>
            <person name="de Haan M."/>
            <person name="Maarse A.C."/>
            <person name="Alcaraz J.-P."/>
            <person name="Cottet A."/>
            <person name="Casacuberta E."/>
            <person name="Monfort A."/>
            <person name="Argiriou A."/>
            <person name="Flores M."/>
            <person name="Liguori R."/>
            <person name="Vitale D."/>
            <person name="Mannhaupt G."/>
            <person name="Haase D."/>
            <person name="Schoof H."/>
            <person name="Rudd S."/>
            <person name="Zaccaria P."/>
            <person name="Mewes H.-W."/>
            <person name="Mayer K.F.X."/>
            <person name="Kaul S."/>
            <person name="Town C.D."/>
            <person name="Koo H.L."/>
            <person name="Tallon L.J."/>
            <person name="Jenkins J."/>
            <person name="Rooney T."/>
            <person name="Rizzo M."/>
            <person name="Walts A."/>
            <person name="Utterback T."/>
            <person name="Fujii C.Y."/>
            <person name="Shea T.P."/>
            <person name="Creasy T.H."/>
            <person name="Haas B."/>
            <person name="Maiti R."/>
            <person name="Wu D."/>
            <person name="Peterson J."/>
            <person name="Van Aken S."/>
            <person name="Pai G."/>
            <person name="Militscher J."/>
            <person name="Sellers P."/>
            <person name="Gill J.E."/>
            <person name="Feldblyum T.V."/>
            <person name="Preuss D."/>
            <person name="Lin X."/>
            <person name="Nierman W.C."/>
            <person name="Salzberg S.L."/>
            <person name="White O."/>
            <person name="Venter J.C."/>
            <person name="Fraser C.M."/>
            <person name="Kaneko T."/>
            <person name="Nakamura Y."/>
            <person name="Sato S."/>
            <person name="Kato T."/>
            <person name="Asamizu E."/>
            <person name="Sasamoto S."/>
            <person name="Kimura T."/>
            <person name="Idesawa K."/>
            <person name="Kawashima K."/>
            <person name="Kishida Y."/>
            <person name="Kiyokawa C."/>
            <person name="Kohara M."/>
            <person name="Matsumoto M."/>
            <person name="Matsuno A."/>
            <person name="Muraki A."/>
            <person name="Nakayama S."/>
            <person name="Nakazaki N."/>
            <person name="Shinpo S."/>
            <person name="Takeuchi C."/>
            <person name="Wada T."/>
            <person name="Watanabe A."/>
            <person name="Yamada M."/>
            <person name="Yasuda M."/>
            <person name="Tabata S."/>
        </authorList>
    </citation>
    <scope>NUCLEOTIDE SEQUENCE [LARGE SCALE GENOMIC DNA]</scope>
    <source>
        <strain>cv. Columbia</strain>
    </source>
</reference>
<reference key="2">
    <citation type="journal article" date="2017" name="Plant J.">
        <title>Araport11: a complete reannotation of the Arabidopsis thaliana reference genome.</title>
        <authorList>
            <person name="Cheng C.Y."/>
            <person name="Krishnakumar V."/>
            <person name="Chan A.P."/>
            <person name="Thibaud-Nissen F."/>
            <person name="Schobel S."/>
            <person name="Town C.D."/>
        </authorList>
    </citation>
    <scope>GENOME REANNOTATION</scope>
    <source>
        <strain>cv. Columbia</strain>
    </source>
</reference>
<reference key="3">
    <citation type="journal article" date="2004" name="Plant Biotechnol. J.">
        <title>DEAD-box RNA helicases in Arabidopsis thaliana: establishing a link between quantitative expression, gene structure and evolution of a family of genes.</title>
        <authorList>
            <person name="Mingam A."/>
            <person name="Toffano-Nioche C."/>
            <person name="Brunaud V."/>
            <person name="Boudet N."/>
            <person name="Kreis M."/>
            <person name="Lecharny A."/>
        </authorList>
    </citation>
    <scope>GENE FAMILY</scope>
    <scope>NOMENCLATURE</scope>
</reference>
<reference key="4">
    <citation type="journal article" date="2013" name="PLoS ONE">
        <title>Genome-wide comparative in silico analysis of the RNA helicase gene family in Zea mays and Glycine max: a comparison with Arabidopsis and Oryza sativa.</title>
        <authorList>
            <person name="Xu R."/>
            <person name="Zhang S."/>
            <person name="Huang J."/>
            <person name="Zheng C."/>
        </authorList>
    </citation>
    <scope>GENE FAMILY</scope>
</reference>
<feature type="chain" id="PRO_0000239185" description="DEAD-box ATP-dependent RNA helicase 45">
    <location>
        <begin position="1"/>
        <end position="989"/>
    </location>
</feature>
<feature type="domain" description="Helicase ATP-binding" evidence="3">
    <location>
        <begin position="427"/>
        <end position="605"/>
    </location>
</feature>
<feature type="domain" description="Helicase C-terminal">
    <location>
        <begin position="590"/>
        <end position="748"/>
    </location>
</feature>
<feature type="region of interest" description="Disordered" evidence="4">
    <location>
        <begin position="1"/>
        <end position="248"/>
    </location>
</feature>
<feature type="region of interest" description="Disordered" evidence="4">
    <location>
        <begin position="305"/>
        <end position="330"/>
    </location>
</feature>
<feature type="coiled-coil region" evidence="2">
    <location>
        <begin position="88"/>
        <end position="182"/>
    </location>
</feature>
<feature type="short sequence motif" description="Q motif">
    <location>
        <begin position="396"/>
        <end position="424"/>
    </location>
</feature>
<feature type="short sequence motif" description="DEAD box">
    <location>
        <begin position="553"/>
        <end position="556"/>
    </location>
</feature>
<feature type="compositionally biased region" description="Basic and acidic residues" evidence="4">
    <location>
        <begin position="1"/>
        <end position="39"/>
    </location>
</feature>
<feature type="compositionally biased region" description="Basic and acidic residues" evidence="4">
    <location>
        <begin position="64"/>
        <end position="101"/>
    </location>
</feature>
<feature type="compositionally biased region" description="Basic and acidic residues" evidence="4">
    <location>
        <begin position="134"/>
        <end position="179"/>
    </location>
</feature>
<feature type="compositionally biased region" description="Basic and acidic residues" evidence="4">
    <location>
        <begin position="203"/>
        <end position="222"/>
    </location>
</feature>
<feature type="compositionally biased region" description="Polar residues" evidence="4">
    <location>
        <begin position="230"/>
        <end position="239"/>
    </location>
</feature>
<feature type="compositionally biased region" description="Acidic residues" evidence="4">
    <location>
        <begin position="321"/>
        <end position="330"/>
    </location>
</feature>
<feature type="binding site" evidence="3">
    <location>
        <begin position="440"/>
        <end position="447"/>
    </location>
    <ligand>
        <name>ATP</name>
        <dbReference type="ChEBI" id="CHEBI:30616"/>
    </ligand>
</feature>
<feature type="modified residue" description="Phosphoserine" evidence="1">
    <location>
        <position position="119"/>
    </location>
</feature>
<feature type="modified residue" description="Phosphoserine" evidence="1">
    <location>
        <position position="200"/>
    </location>
</feature>
<dbReference type="EC" id="3.6.4.13"/>
<dbReference type="EMBL" id="AC016661">
    <property type="protein sequence ID" value="AAF23310.1"/>
    <property type="molecule type" value="Genomic_DNA"/>
</dbReference>
<dbReference type="EMBL" id="CP002686">
    <property type="protein sequence ID" value="AEE74788.1"/>
    <property type="molecule type" value="Genomic_DNA"/>
</dbReference>
<dbReference type="RefSeq" id="NP_187573.1">
    <property type="nucleotide sequence ID" value="NM_111796.1"/>
</dbReference>
<dbReference type="SMR" id="Q9SF41"/>
<dbReference type="FunCoup" id="Q9SF41">
    <property type="interactions" value="4029"/>
</dbReference>
<dbReference type="STRING" id="3702.Q9SF41"/>
<dbReference type="GlyGen" id="Q9SF41">
    <property type="glycosylation" value="2 sites, 1 O-linked glycan (1 site)"/>
</dbReference>
<dbReference type="PaxDb" id="3702-AT3G09620.1"/>
<dbReference type="EnsemblPlants" id="AT3G09620.1">
    <property type="protein sequence ID" value="AT3G09620.1"/>
    <property type="gene ID" value="AT3G09620"/>
</dbReference>
<dbReference type="GeneID" id="820119"/>
<dbReference type="Gramene" id="AT3G09620.1">
    <property type="protein sequence ID" value="AT3G09620.1"/>
    <property type="gene ID" value="AT3G09620"/>
</dbReference>
<dbReference type="KEGG" id="ath:AT3G09620"/>
<dbReference type="Araport" id="AT3G09620"/>
<dbReference type="TAIR" id="AT3G09620"/>
<dbReference type="eggNOG" id="KOG0334">
    <property type="taxonomic scope" value="Eukaryota"/>
</dbReference>
<dbReference type="HOGENOM" id="CLU_003041_0_1_1"/>
<dbReference type="InParanoid" id="Q9SF41"/>
<dbReference type="OMA" id="NAEMSME"/>
<dbReference type="PhylomeDB" id="Q9SF41"/>
<dbReference type="PRO" id="PR:Q9SF41"/>
<dbReference type="Proteomes" id="UP000006548">
    <property type="component" value="Chromosome 3"/>
</dbReference>
<dbReference type="ExpressionAtlas" id="Q9SF41">
    <property type="expression patterns" value="baseline and differential"/>
</dbReference>
<dbReference type="GO" id="GO:0005524">
    <property type="term" value="F:ATP binding"/>
    <property type="evidence" value="ECO:0007669"/>
    <property type="project" value="UniProtKB-KW"/>
</dbReference>
<dbReference type="GO" id="GO:0016887">
    <property type="term" value="F:ATP hydrolysis activity"/>
    <property type="evidence" value="ECO:0007669"/>
    <property type="project" value="RHEA"/>
</dbReference>
<dbReference type="GO" id="GO:0003723">
    <property type="term" value="F:RNA binding"/>
    <property type="evidence" value="ECO:0007669"/>
    <property type="project" value="UniProtKB-KW"/>
</dbReference>
<dbReference type="GO" id="GO:0003724">
    <property type="term" value="F:RNA helicase activity"/>
    <property type="evidence" value="ECO:0007669"/>
    <property type="project" value="UniProtKB-EC"/>
</dbReference>
<dbReference type="CDD" id="cd17953">
    <property type="entry name" value="DEADc_DDX46"/>
    <property type="match status" value="1"/>
</dbReference>
<dbReference type="CDD" id="cd22475">
    <property type="entry name" value="KH-I_AtRH42_like"/>
    <property type="match status" value="1"/>
</dbReference>
<dbReference type="CDD" id="cd18787">
    <property type="entry name" value="SF2_C_DEAD"/>
    <property type="match status" value="1"/>
</dbReference>
<dbReference type="FunFam" id="3.40.50.300:FF:000079">
    <property type="entry name" value="probable ATP-dependent RNA helicase DDX17"/>
    <property type="match status" value="1"/>
</dbReference>
<dbReference type="Gene3D" id="3.40.50.300">
    <property type="entry name" value="P-loop containing nucleotide triphosphate hydrolases"/>
    <property type="match status" value="2"/>
</dbReference>
<dbReference type="InterPro" id="IPR011545">
    <property type="entry name" value="DEAD/DEAH_box_helicase_dom"/>
</dbReference>
<dbReference type="InterPro" id="IPR014001">
    <property type="entry name" value="Helicase_ATP-bd"/>
</dbReference>
<dbReference type="InterPro" id="IPR001650">
    <property type="entry name" value="Helicase_C-like"/>
</dbReference>
<dbReference type="InterPro" id="IPR027417">
    <property type="entry name" value="P-loop_NTPase"/>
</dbReference>
<dbReference type="InterPro" id="IPR056149">
    <property type="entry name" value="PRP5/DDX46/KHDC4_KH"/>
</dbReference>
<dbReference type="InterPro" id="IPR000629">
    <property type="entry name" value="RNA-helicase_DEAD-box_CS"/>
</dbReference>
<dbReference type="InterPro" id="IPR014014">
    <property type="entry name" value="RNA_helicase_DEAD_Q_motif"/>
</dbReference>
<dbReference type="PANTHER" id="PTHR47958">
    <property type="entry name" value="ATP-DEPENDENT RNA HELICASE DBP3"/>
    <property type="match status" value="1"/>
</dbReference>
<dbReference type="Pfam" id="PF00270">
    <property type="entry name" value="DEAD"/>
    <property type="match status" value="1"/>
</dbReference>
<dbReference type="Pfam" id="PF00271">
    <property type="entry name" value="Helicase_C"/>
    <property type="match status" value="1"/>
</dbReference>
<dbReference type="Pfam" id="PF23469">
    <property type="entry name" value="KH_12"/>
    <property type="match status" value="1"/>
</dbReference>
<dbReference type="SMART" id="SM00487">
    <property type="entry name" value="DEXDc"/>
    <property type="match status" value="1"/>
</dbReference>
<dbReference type="SMART" id="SM00490">
    <property type="entry name" value="HELICc"/>
    <property type="match status" value="1"/>
</dbReference>
<dbReference type="SUPFAM" id="SSF52540">
    <property type="entry name" value="P-loop containing nucleoside triphosphate hydrolases"/>
    <property type="match status" value="2"/>
</dbReference>
<dbReference type="PROSITE" id="PS00039">
    <property type="entry name" value="DEAD_ATP_HELICASE"/>
    <property type="match status" value="1"/>
</dbReference>
<dbReference type="PROSITE" id="PS51192">
    <property type="entry name" value="HELICASE_ATP_BIND_1"/>
    <property type="match status" value="1"/>
</dbReference>
<dbReference type="PROSITE" id="PS51194">
    <property type="entry name" value="HELICASE_CTER"/>
    <property type="match status" value="1"/>
</dbReference>
<dbReference type="PROSITE" id="PS51195">
    <property type="entry name" value="Q_MOTIF"/>
    <property type="match status" value="1"/>
</dbReference>
<comment type="catalytic activity">
    <reaction>
        <text>ATP + H2O = ADP + phosphate + H(+)</text>
        <dbReference type="Rhea" id="RHEA:13065"/>
        <dbReference type="ChEBI" id="CHEBI:15377"/>
        <dbReference type="ChEBI" id="CHEBI:15378"/>
        <dbReference type="ChEBI" id="CHEBI:30616"/>
        <dbReference type="ChEBI" id="CHEBI:43474"/>
        <dbReference type="ChEBI" id="CHEBI:456216"/>
        <dbReference type="EC" id="3.6.4.13"/>
    </reaction>
</comment>
<comment type="domain">
    <text>The Q motif is unique to and characteristic of the DEAD box family of RNA helicases and controls ATP binding and hydrolysis.</text>
</comment>
<comment type="similarity">
    <text evidence="5">Belongs to the DEAD box helicase family. DDX46/PRP5 subfamily.</text>
</comment>
<accession>Q9SF41</accession>
<sequence length="989" mass="111625">MLEKSKSRKENDRKDRDRSKKENGRRDTTEMRSRVKRCDSEEEERIRIRRDRKSSDFEEEEYERDSKRRGEDKGRGRRERDRDRGKYLKRDRERREREKEKGRKKQKKERSREDCNEESDDVKCGLKRKRTERSRHGDDDVEKKTRDEQVEDEQKQLAEEVEKRRRRVQEWQELKRQNEEAQIESKGPETGKAWTLDGESDDEVKSDSEMDVDRDTKLENGGDAKMVASENETAVTVSENGGDRAADEDEIDPLDAFMNTMVLPEVEKLSNIVIDGILDFKMNGKETGDQAKKGFNKAALGRIIQGEDSDSDYSEPKSDDDPSLDEDDEEFMKRVKKTKAEKLSLVDHSKIEYEPFRKNFYIEVKDISRMTQDAVNAYRKELELKVHGKDVPRPIQFWHQTGLTSKILDTLKKLNYEKPMPIQAQALPIIMSGRDCIGVAKTGSGKTLGFVLPMLRHIKDQPPVEAGDGPIGLVMAPTRELVQQIYSDIRKFSKALGIICVPVYGGSGVAQQISELKRGTEIVVCTPGRMIDILCTSSGKITNLRRVTYLVMDEADRMFDMGFEPQITRIVQNIRPDRQTVLFSATFPRQVETLARKVLNKPVEIQVGGRSVVNKDITQLVEIRPESERFSRLLELLGEWYEKGKVLVFVRSQEKSISDFKSDVCNLLIATSVAARGLDVKELELVVNFDAPNHYEDYVHRVGRTGRAGRKGCAVTFISEDDAKYAPDLVKALELSEQPVPDDVKAVAEGFMAKVKQGIEQAHGTGYGGSGFKFNEEEDEVRKAAKKAQAKEYGFEEEKSDSEDENDVVRKAGGDISQQQITLAQIAAIASAASKAPVTANQLLPNGGGLATEPGIPPTDGAGRVAAMIAAANVQQYLAKIQADAIPEHYEAELEINDFPQNARWKVTHKETLGPISEWSGASITTRGKFYEAGRIPGPEERKLYLFVEGPTEISVKTAKAELKRVLEDITNQTFSLPGGAQSGRYSVL</sequence>
<evidence type="ECO:0000250" key="1">
    <source>
        <dbReference type="UniProtKB" id="Q8H0U8"/>
    </source>
</evidence>
<evidence type="ECO:0000255" key="2"/>
<evidence type="ECO:0000255" key="3">
    <source>
        <dbReference type="PROSITE-ProRule" id="PRU00541"/>
    </source>
</evidence>
<evidence type="ECO:0000256" key="4">
    <source>
        <dbReference type="SAM" id="MobiDB-lite"/>
    </source>
</evidence>
<evidence type="ECO:0000305" key="5"/>
<protein>
    <recommendedName>
        <fullName>DEAD-box ATP-dependent RNA helicase 45</fullName>
        <ecNumber>3.6.4.13</ecNumber>
    </recommendedName>
</protein>
<keyword id="KW-0067">ATP-binding</keyword>
<keyword id="KW-0175">Coiled coil</keyword>
<keyword id="KW-0347">Helicase</keyword>
<keyword id="KW-0378">Hydrolase</keyword>
<keyword id="KW-0547">Nucleotide-binding</keyword>
<keyword id="KW-0597">Phosphoprotein</keyword>
<keyword id="KW-1185">Reference proteome</keyword>
<keyword id="KW-0694">RNA-binding</keyword>
<gene>
    <name type="primary">RH45</name>
    <name type="ordered locus">At3g09620</name>
    <name type="ORF">F11F8_21</name>
</gene>
<organism>
    <name type="scientific">Arabidopsis thaliana</name>
    <name type="common">Mouse-ear cress</name>
    <dbReference type="NCBI Taxonomy" id="3702"/>
    <lineage>
        <taxon>Eukaryota</taxon>
        <taxon>Viridiplantae</taxon>
        <taxon>Streptophyta</taxon>
        <taxon>Embryophyta</taxon>
        <taxon>Tracheophyta</taxon>
        <taxon>Spermatophyta</taxon>
        <taxon>Magnoliopsida</taxon>
        <taxon>eudicotyledons</taxon>
        <taxon>Gunneridae</taxon>
        <taxon>Pentapetalae</taxon>
        <taxon>rosids</taxon>
        <taxon>malvids</taxon>
        <taxon>Brassicales</taxon>
        <taxon>Brassicaceae</taxon>
        <taxon>Camelineae</taxon>
        <taxon>Arabidopsis</taxon>
    </lineage>
</organism>
<proteinExistence type="inferred from homology"/>
<name>RH45_ARATH</name>